<reference key="1">
    <citation type="submission" date="2006-03" db="EMBL/GenBank/DDBJ databases">
        <title>Complete sequence of chromosome of Nitrobacter hamburgensis X14.</title>
        <authorList>
            <consortium name="US DOE Joint Genome Institute"/>
            <person name="Copeland A."/>
            <person name="Lucas S."/>
            <person name="Lapidus A."/>
            <person name="Barry K."/>
            <person name="Detter J.C."/>
            <person name="Glavina del Rio T."/>
            <person name="Hammon N."/>
            <person name="Israni S."/>
            <person name="Dalin E."/>
            <person name="Tice H."/>
            <person name="Pitluck S."/>
            <person name="Chain P."/>
            <person name="Malfatti S."/>
            <person name="Shin M."/>
            <person name="Vergez L."/>
            <person name="Schmutz J."/>
            <person name="Larimer F."/>
            <person name="Land M."/>
            <person name="Hauser L."/>
            <person name="Kyrpides N."/>
            <person name="Ivanova N."/>
            <person name="Ward B."/>
            <person name="Arp D."/>
            <person name="Klotz M."/>
            <person name="Stein L."/>
            <person name="O'Mullan G."/>
            <person name="Starkenburg S."/>
            <person name="Sayavedra L."/>
            <person name="Poret-Peterson A.T."/>
            <person name="Gentry M.E."/>
            <person name="Bruce D."/>
            <person name="Richardson P."/>
        </authorList>
    </citation>
    <scope>NUCLEOTIDE SEQUENCE [LARGE SCALE GENOMIC DNA]</scope>
    <source>
        <strain>DSM 10229 / NCIMB 13809 / X14</strain>
    </source>
</reference>
<name>RS6_NITHX</name>
<protein>
    <recommendedName>
        <fullName evidence="1">Small ribosomal subunit protein bS6</fullName>
    </recommendedName>
    <alternativeName>
        <fullName evidence="3">30S ribosomal protein S6</fullName>
    </alternativeName>
</protein>
<organism>
    <name type="scientific">Nitrobacter hamburgensis (strain DSM 10229 / NCIMB 13809 / X14)</name>
    <dbReference type="NCBI Taxonomy" id="323097"/>
    <lineage>
        <taxon>Bacteria</taxon>
        <taxon>Pseudomonadati</taxon>
        <taxon>Pseudomonadota</taxon>
        <taxon>Alphaproteobacteria</taxon>
        <taxon>Hyphomicrobiales</taxon>
        <taxon>Nitrobacteraceae</taxon>
        <taxon>Nitrobacter</taxon>
    </lineage>
</organism>
<dbReference type="EMBL" id="CP000319">
    <property type="protein sequence ID" value="ABE63147.1"/>
    <property type="molecule type" value="Genomic_DNA"/>
</dbReference>
<dbReference type="RefSeq" id="WP_011510822.1">
    <property type="nucleotide sequence ID" value="NC_007964.1"/>
</dbReference>
<dbReference type="SMR" id="Q1QKV0"/>
<dbReference type="STRING" id="323097.Nham_2355"/>
<dbReference type="KEGG" id="nha:Nham_2355"/>
<dbReference type="eggNOG" id="COG0360">
    <property type="taxonomic scope" value="Bacteria"/>
</dbReference>
<dbReference type="HOGENOM" id="CLU_113441_2_0_5"/>
<dbReference type="OrthoDB" id="9812702at2"/>
<dbReference type="Proteomes" id="UP000001953">
    <property type="component" value="Chromosome"/>
</dbReference>
<dbReference type="GO" id="GO:0022627">
    <property type="term" value="C:cytosolic small ribosomal subunit"/>
    <property type="evidence" value="ECO:0007669"/>
    <property type="project" value="TreeGrafter"/>
</dbReference>
<dbReference type="GO" id="GO:0070181">
    <property type="term" value="F:small ribosomal subunit rRNA binding"/>
    <property type="evidence" value="ECO:0007669"/>
    <property type="project" value="TreeGrafter"/>
</dbReference>
<dbReference type="GO" id="GO:0003735">
    <property type="term" value="F:structural constituent of ribosome"/>
    <property type="evidence" value="ECO:0007669"/>
    <property type="project" value="InterPro"/>
</dbReference>
<dbReference type="GO" id="GO:0006412">
    <property type="term" value="P:translation"/>
    <property type="evidence" value="ECO:0007669"/>
    <property type="project" value="UniProtKB-UniRule"/>
</dbReference>
<dbReference type="CDD" id="cd00473">
    <property type="entry name" value="bS6"/>
    <property type="match status" value="1"/>
</dbReference>
<dbReference type="Gene3D" id="3.30.70.60">
    <property type="match status" value="1"/>
</dbReference>
<dbReference type="HAMAP" id="MF_00360">
    <property type="entry name" value="Ribosomal_bS6"/>
    <property type="match status" value="1"/>
</dbReference>
<dbReference type="InterPro" id="IPR000529">
    <property type="entry name" value="Ribosomal_bS6"/>
</dbReference>
<dbReference type="InterPro" id="IPR035980">
    <property type="entry name" value="Ribosomal_bS6_sf"/>
</dbReference>
<dbReference type="InterPro" id="IPR020814">
    <property type="entry name" value="Ribosomal_S6_plastid/chlpt"/>
</dbReference>
<dbReference type="InterPro" id="IPR014717">
    <property type="entry name" value="Transl_elong_EF1B/ribsomal_bS6"/>
</dbReference>
<dbReference type="NCBIfam" id="TIGR00166">
    <property type="entry name" value="S6"/>
    <property type="match status" value="1"/>
</dbReference>
<dbReference type="PANTHER" id="PTHR21011">
    <property type="entry name" value="MITOCHONDRIAL 28S RIBOSOMAL PROTEIN S6"/>
    <property type="match status" value="1"/>
</dbReference>
<dbReference type="PANTHER" id="PTHR21011:SF1">
    <property type="entry name" value="SMALL RIBOSOMAL SUBUNIT PROTEIN BS6M"/>
    <property type="match status" value="1"/>
</dbReference>
<dbReference type="Pfam" id="PF01250">
    <property type="entry name" value="Ribosomal_S6"/>
    <property type="match status" value="1"/>
</dbReference>
<dbReference type="SUPFAM" id="SSF54995">
    <property type="entry name" value="Ribosomal protein S6"/>
    <property type="match status" value="1"/>
</dbReference>
<accession>Q1QKV0</accession>
<feature type="chain" id="PRO_1000005301" description="Small ribosomal subunit protein bS6">
    <location>
        <begin position="1"/>
        <end position="147"/>
    </location>
</feature>
<feature type="region of interest" description="Disordered" evidence="2">
    <location>
        <begin position="97"/>
        <end position="147"/>
    </location>
</feature>
<feature type="compositionally biased region" description="Basic and acidic residues" evidence="2">
    <location>
        <begin position="97"/>
        <end position="141"/>
    </location>
</feature>
<gene>
    <name evidence="1" type="primary">rpsF</name>
    <name type="ordered locus">Nham_2355</name>
</gene>
<comment type="function">
    <text evidence="1">Binds together with bS18 to 16S ribosomal RNA.</text>
</comment>
<comment type="similarity">
    <text evidence="1">Belongs to the bacterial ribosomal protein bS6 family.</text>
</comment>
<evidence type="ECO:0000255" key="1">
    <source>
        <dbReference type="HAMAP-Rule" id="MF_00360"/>
    </source>
</evidence>
<evidence type="ECO:0000256" key="2">
    <source>
        <dbReference type="SAM" id="MobiDB-lite"/>
    </source>
</evidence>
<evidence type="ECO:0000305" key="3"/>
<keyword id="KW-1185">Reference proteome</keyword>
<keyword id="KW-0687">Ribonucleoprotein</keyword>
<keyword id="KW-0689">Ribosomal protein</keyword>
<keyword id="KW-0694">RNA-binding</keyword>
<keyword id="KW-0699">rRNA-binding</keyword>
<sequence length="147" mass="16800">MPLYEHVFLARQDASSQQVEELTNQITGVITGLGGKVTKTENWGVRSLTYRMKKNRKAHFVLLNIDGPAAVVSEIERQERIHEDVIRYLSIRVEEHEEGPSAMMRKADRDRERDDRGGGFRGDREGGFRGDRGPRRPREEAPAVVEE</sequence>
<proteinExistence type="inferred from homology"/>